<proteinExistence type="inferred from homology"/>
<comment type="function">
    <text evidence="4">Transcription factor involved in regulation of the dehydrocurvularin biosynthesis gene cluster (PubMed:23335766).</text>
</comment>
<comment type="subcellular location">
    <subcellularLocation>
        <location evidence="1">Nucleus</location>
    </subcellularLocation>
</comment>
<feature type="chain" id="PRO_0000438392" description="Dehydrocurvularin biosynthesis regulator">
    <location>
        <begin position="1"/>
        <end position="728"/>
    </location>
</feature>
<feature type="DNA-binding region" description="Zn(2)-C6 fungal-type" evidence="1">
    <location>
        <begin position="28"/>
        <end position="58"/>
    </location>
</feature>
<feature type="region of interest" description="Disordered" evidence="2">
    <location>
        <begin position="75"/>
        <end position="130"/>
    </location>
</feature>
<feature type="region of interest" description="Disordered" evidence="2">
    <location>
        <begin position="606"/>
        <end position="626"/>
    </location>
</feature>
<feature type="compositionally biased region" description="Polar residues" evidence="2">
    <location>
        <begin position="89"/>
        <end position="109"/>
    </location>
</feature>
<accession>L7X8G0</accession>
<name>CURR_ASPTE</name>
<evidence type="ECO:0000255" key="1">
    <source>
        <dbReference type="PROSITE-ProRule" id="PRU00227"/>
    </source>
</evidence>
<evidence type="ECO:0000256" key="2">
    <source>
        <dbReference type="SAM" id="MobiDB-lite"/>
    </source>
</evidence>
<evidence type="ECO:0000303" key="3">
    <source>
    </source>
</evidence>
<evidence type="ECO:0000305" key="4">
    <source>
    </source>
</evidence>
<organism>
    <name type="scientific">Aspergillus terreus</name>
    <dbReference type="NCBI Taxonomy" id="33178"/>
    <lineage>
        <taxon>Eukaryota</taxon>
        <taxon>Fungi</taxon>
        <taxon>Dikarya</taxon>
        <taxon>Ascomycota</taxon>
        <taxon>Pezizomycotina</taxon>
        <taxon>Eurotiomycetes</taxon>
        <taxon>Eurotiomycetidae</taxon>
        <taxon>Eurotiales</taxon>
        <taxon>Aspergillaceae</taxon>
        <taxon>Aspergillus</taxon>
        <taxon>Aspergillus subgen. Circumdati</taxon>
    </lineage>
</organism>
<reference key="1">
    <citation type="journal article" date="2013" name="Appl. Environ. Microbiol.">
        <title>Characterization of the biosynthetic genes for 10,11-dehydrocurvularin, a heat shock response-modulating anticancer fungal polyketide from Aspergillus terreus.</title>
        <authorList>
            <person name="Xu Y."/>
            <person name="Espinosa-Artiles P."/>
            <person name="Schubert V."/>
            <person name="Xu Y.M."/>
            <person name="Zhang W."/>
            <person name="Lin M."/>
            <person name="Gunatilaka A.A."/>
            <person name="Sussmuth R."/>
            <person name="Molnar I."/>
        </authorList>
    </citation>
    <scope>NUCLEOTIDE SEQUENCE [GENOMIC DNA]</scope>
    <scope>FUNCTION</scope>
    <source>
        <strain>AH-02-30-F7</strain>
    </source>
</reference>
<protein>
    <recommendedName>
        <fullName evidence="3">Dehydrocurvularin biosynthesis regulator</fullName>
    </recommendedName>
</protein>
<gene>
    <name evidence="3" type="primary">curR</name>
</gene>
<sequence>MSLSHVAPSHDAYGQAKRRKVRKGTHSCWECKRRKMKCRFDPRIASACNGCRRRGSPCISQEFPEDLEEAVMNIGTTSSDGTPFDGRTRATTPSERTDQILTPVSTVREPSQYPRSPEQHLPTGNDTSQRKYERLSRFLHELLPSRADRESIFKASRHSSILSHELLTTPYITLHQNGLQTPESLLMTPQPNSHPVLIARYMLQFALFLQHLPPDLYKEIQGLSEPPRATMERLADAAIYHVTTNEALINSIESLECIMLESLYQVNLGNLRRSWVAGRRAMSLAQFMGFHRPDNQTRYYKALDPKTNYDPQIMWLRIIILDRQLCLLLGLPEGCTDHTMASSETRIANNCPMGRLEQLHCVAMSRILDRNASQPSGRDLTATRAIDLELQKAAGSLPSKWWLAPKLDSASTDLQAMFWDTRRLVLQICHYNLLNQLHLPYMLRPSTAGNKYEYSRITCVNASREVLSRYNSLRSFNRIAYSCRTVDFLALMAAMALLLAHMDSYRDGAENLLANQYLSDRGMIEQVQEHMSEINRLNSDELSAQSADLLKSLLAIDLEKGKGRVSVREAGSEGMLPQDGMGPEEESVVRVHIPYFGIIRIAREKQHATTASKPPVDRSPSSNSDAQLRFSTLTHPSNALPLSPNTTSNPLSFAVADAAAPHEFTTPFAHQQQQPCQPTFSNPGLSLTPSPLMQGGYPDLAAGSEDWAFQRVDMAFFESIMRNVGGDL</sequence>
<keyword id="KW-0238">DNA-binding</keyword>
<keyword id="KW-0479">Metal-binding</keyword>
<keyword id="KW-0539">Nucleus</keyword>
<keyword id="KW-0804">Transcription</keyword>
<keyword id="KW-0805">Transcription regulation</keyword>
<keyword id="KW-0862">Zinc</keyword>
<dbReference type="EMBL" id="JX971534">
    <property type="protein sequence ID" value="AGC95322.1"/>
    <property type="molecule type" value="Genomic_DNA"/>
</dbReference>
<dbReference type="VEuPathDB" id="FungiDB:ATEG_04564"/>
<dbReference type="GO" id="GO:0005634">
    <property type="term" value="C:nucleus"/>
    <property type="evidence" value="ECO:0007669"/>
    <property type="project" value="UniProtKB-SubCell"/>
</dbReference>
<dbReference type="GO" id="GO:0003677">
    <property type="term" value="F:DNA binding"/>
    <property type="evidence" value="ECO:0007669"/>
    <property type="project" value="UniProtKB-KW"/>
</dbReference>
<dbReference type="GO" id="GO:0000981">
    <property type="term" value="F:DNA-binding transcription factor activity, RNA polymerase II-specific"/>
    <property type="evidence" value="ECO:0007669"/>
    <property type="project" value="InterPro"/>
</dbReference>
<dbReference type="GO" id="GO:0008270">
    <property type="term" value="F:zinc ion binding"/>
    <property type="evidence" value="ECO:0007669"/>
    <property type="project" value="InterPro"/>
</dbReference>
<dbReference type="GO" id="GO:0006351">
    <property type="term" value="P:DNA-templated transcription"/>
    <property type="evidence" value="ECO:0007669"/>
    <property type="project" value="InterPro"/>
</dbReference>
<dbReference type="GO" id="GO:0009893">
    <property type="term" value="P:positive regulation of metabolic process"/>
    <property type="evidence" value="ECO:0007669"/>
    <property type="project" value="UniProtKB-ARBA"/>
</dbReference>
<dbReference type="CDD" id="cd12148">
    <property type="entry name" value="fungal_TF_MHR"/>
    <property type="match status" value="1"/>
</dbReference>
<dbReference type="CDD" id="cd00067">
    <property type="entry name" value="GAL4"/>
    <property type="match status" value="1"/>
</dbReference>
<dbReference type="Gene3D" id="4.10.240.10">
    <property type="entry name" value="Zn(2)-C6 fungal-type DNA-binding domain"/>
    <property type="match status" value="1"/>
</dbReference>
<dbReference type="InterPro" id="IPR007219">
    <property type="entry name" value="Transcription_factor_dom_fun"/>
</dbReference>
<dbReference type="InterPro" id="IPR036864">
    <property type="entry name" value="Zn2-C6_fun-type_DNA-bd_sf"/>
</dbReference>
<dbReference type="InterPro" id="IPR001138">
    <property type="entry name" value="Zn2Cys6_DnaBD"/>
</dbReference>
<dbReference type="PANTHER" id="PTHR47840:SF1">
    <property type="entry name" value="ZN(II)2CYS6 TRANSCRIPTION FACTOR (EUROFUNG)"/>
    <property type="match status" value="1"/>
</dbReference>
<dbReference type="PANTHER" id="PTHR47840">
    <property type="entry name" value="ZN(II)2CYS6 TRANSCRIPTION FACTOR (EUROFUNG)-RELATED"/>
    <property type="match status" value="1"/>
</dbReference>
<dbReference type="Pfam" id="PF00172">
    <property type="entry name" value="Zn_clus"/>
    <property type="match status" value="1"/>
</dbReference>
<dbReference type="SMART" id="SM00906">
    <property type="entry name" value="Fungal_trans"/>
    <property type="match status" value="1"/>
</dbReference>
<dbReference type="SMART" id="SM00066">
    <property type="entry name" value="GAL4"/>
    <property type="match status" value="1"/>
</dbReference>
<dbReference type="SUPFAM" id="SSF57701">
    <property type="entry name" value="Zn2/Cys6 DNA-binding domain"/>
    <property type="match status" value="1"/>
</dbReference>
<dbReference type="PROSITE" id="PS00463">
    <property type="entry name" value="ZN2_CY6_FUNGAL_1"/>
    <property type="match status" value="1"/>
</dbReference>
<dbReference type="PROSITE" id="PS50048">
    <property type="entry name" value="ZN2_CY6_FUNGAL_2"/>
    <property type="match status" value="1"/>
</dbReference>